<feature type="chain" id="PRO_0000283524" description="Putative F-box protein At5g15660">
    <location>
        <begin position="1"/>
        <end position="438"/>
    </location>
</feature>
<feature type="domain" description="F-box">
    <location>
        <begin position="22"/>
        <end position="68"/>
    </location>
</feature>
<feature type="region of interest" description="Disordered" evidence="1">
    <location>
        <begin position="1"/>
        <end position="24"/>
    </location>
</feature>
<accession>Q9LFW0</accession>
<organism>
    <name type="scientific">Arabidopsis thaliana</name>
    <name type="common">Mouse-ear cress</name>
    <dbReference type="NCBI Taxonomy" id="3702"/>
    <lineage>
        <taxon>Eukaryota</taxon>
        <taxon>Viridiplantae</taxon>
        <taxon>Streptophyta</taxon>
        <taxon>Embryophyta</taxon>
        <taxon>Tracheophyta</taxon>
        <taxon>Spermatophyta</taxon>
        <taxon>Magnoliopsida</taxon>
        <taxon>eudicotyledons</taxon>
        <taxon>Gunneridae</taxon>
        <taxon>Pentapetalae</taxon>
        <taxon>rosids</taxon>
        <taxon>malvids</taxon>
        <taxon>Brassicales</taxon>
        <taxon>Brassicaceae</taxon>
        <taxon>Camelineae</taxon>
        <taxon>Arabidopsis</taxon>
    </lineage>
</organism>
<keyword id="KW-1185">Reference proteome</keyword>
<gene>
    <name type="ordered locus">At5g15660</name>
    <name type="ORF">F14F8.40</name>
</gene>
<evidence type="ECO:0000256" key="1">
    <source>
        <dbReference type="SAM" id="MobiDB-lite"/>
    </source>
</evidence>
<name>FB257_ARATH</name>
<reference key="1">
    <citation type="journal article" date="2000" name="Nature">
        <title>Sequence and analysis of chromosome 5 of the plant Arabidopsis thaliana.</title>
        <authorList>
            <person name="Tabata S."/>
            <person name="Kaneko T."/>
            <person name="Nakamura Y."/>
            <person name="Kotani H."/>
            <person name="Kato T."/>
            <person name="Asamizu E."/>
            <person name="Miyajima N."/>
            <person name="Sasamoto S."/>
            <person name="Kimura T."/>
            <person name="Hosouchi T."/>
            <person name="Kawashima K."/>
            <person name="Kohara M."/>
            <person name="Matsumoto M."/>
            <person name="Matsuno A."/>
            <person name="Muraki A."/>
            <person name="Nakayama S."/>
            <person name="Nakazaki N."/>
            <person name="Naruo K."/>
            <person name="Okumura S."/>
            <person name="Shinpo S."/>
            <person name="Takeuchi C."/>
            <person name="Wada T."/>
            <person name="Watanabe A."/>
            <person name="Yamada M."/>
            <person name="Yasuda M."/>
            <person name="Sato S."/>
            <person name="de la Bastide M."/>
            <person name="Huang E."/>
            <person name="Spiegel L."/>
            <person name="Gnoj L."/>
            <person name="O'Shaughnessy A."/>
            <person name="Preston R."/>
            <person name="Habermann K."/>
            <person name="Murray J."/>
            <person name="Johnson D."/>
            <person name="Rohlfing T."/>
            <person name="Nelson J."/>
            <person name="Stoneking T."/>
            <person name="Pepin K."/>
            <person name="Spieth J."/>
            <person name="Sekhon M."/>
            <person name="Armstrong J."/>
            <person name="Becker M."/>
            <person name="Belter E."/>
            <person name="Cordum H."/>
            <person name="Cordes M."/>
            <person name="Courtney L."/>
            <person name="Courtney W."/>
            <person name="Dante M."/>
            <person name="Du H."/>
            <person name="Edwards J."/>
            <person name="Fryman J."/>
            <person name="Haakensen B."/>
            <person name="Lamar E."/>
            <person name="Latreille P."/>
            <person name="Leonard S."/>
            <person name="Meyer R."/>
            <person name="Mulvaney E."/>
            <person name="Ozersky P."/>
            <person name="Riley A."/>
            <person name="Strowmatt C."/>
            <person name="Wagner-McPherson C."/>
            <person name="Wollam A."/>
            <person name="Yoakum M."/>
            <person name="Bell M."/>
            <person name="Dedhia N."/>
            <person name="Parnell L."/>
            <person name="Shah R."/>
            <person name="Rodriguez M."/>
            <person name="Hoon See L."/>
            <person name="Vil D."/>
            <person name="Baker J."/>
            <person name="Kirchoff K."/>
            <person name="Toth K."/>
            <person name="King L."/>
            <person name="Bahret A."/>
            <person name="Miller B."/>
            <person name="Marra M.A."/>
            <person name="Martienssen R."/>
            <person name="McCombie W.R."/>
            <person name="Wilson R.K."/>
            <person name="Murphy G."/>
            <person name="Bancroft I."/>
            <person name="Volckaert G."/>
            <person name="Wambutt R."/>
            <person name="Duesterhoeft A."/>
            <person name="Stiekema W."/>
            <person name="Pohl T."/>
            <person name="Entian K.-D."/>
            <person name="Terryn N."/>
            <person name="Hartley N."/>
            <person name="Bent E."/>
            <person name="Johnson S."/>
            <person name="Langham S.-A."/>
            <person name="McCullagh B."/>
            <person name="Robben J."/>
            <person name="Grymonprez B."/>
            <person name="Zimmermann W."/>
            <person name="Ramsperger U."/>
            <person name="Wedler H."/>
            <person name="Balke K."/>
            <person name="Wedler E."/>
            <person name="Peters S."/>
            <person name="van Staveren M."/>
            <person name="Dirkse W."/>
            <person name="Mooijman P."/>
            <person name="Klein Lankhorst R."/>
            <person name="Weitzenegger T."/>
            <person name="Bothe G."/>
            <person name="Rose M."/>
            <person name="Hauf J."/>
            <person name="Berneiser S."/>
            <person name="Hempel S."/>
            <person name="Feldpausch M."/>
            <person name="Lamberth S."/>
            <person name="Villarroel R."/>
            <person name="Gielen J."/>
            <person name="Ardiles W."/>
            <person name="Bents O."/>
            <person name="Lemcke K."/>
            <person name="Kolesov G."/>
            <person name="Mayer K.F.X."/>
            <person name="Rudd S."/>
            <person name="Schoof H."/>
            <person name="Schueller C."/>
            <person name="Zaccaria P."/>
            <person name="Mewes H.-W."/>
            <person name="Bevan M."/>
            <person name="Fransz P.F."/>
        </authorList>
    </citation>
    <scope>NUCLEOTIDE SEQUENCE [LARGE SCALE GENOMIC DNA]</scope>
    <source>
        <strain>cv. Columbia</strain>
    </source>
</reference>
<reference key="2">
    <citation type="journal article" date="2017" name="Plant J.">
        <title>Araport11: a complete reannotation of the Arabidopsis thaliana reference genome.</title>
        <authorList>
            <person name="Cheng C.Y."/>
            <person name="Krishnakumar V."/>
            <person name="Chan A.P."/>
            <person name="Thibaud-Nissen F."/>
            <person name="Schobel S."/>
            <person name="Town C.D."/>
        </authorList>
    </citation>
    <scope>GENOME REANNOTATION</scope>
    <source>
        <strain>cv. Columbia</strain>
    </source>
</reference>
<dbReference type="EMBL" id="AL391144">
    <property type="protein sequence ID" value="CAC01765.1"/>
    <property type="molecule type" value="Genomic_DNA"/>
</dbReference>
<dbReference type="EMBL" id="CP002688">
    <property type="protein sequence ID" value="AED92189.1"/>
    <property type="molecule type" value="Genomic_DNA"/>
</dbReference>
<dbReference type="PIR" id="T51395">
    <property type="entry name" value="T51395"/>
</dbReference>
<dbReference type="RefSeq" id="NP_197070.1">
    <property type="nucleotide sequence ID" value="NM_121570.1"/>
</dbReference>
<dbReference type="FunCoup" id="Q9LFW0">
    <property type="interactions" value="16"/>
</dbReference>
<dbReference type="STRING" id="3702.Q9LFW0"/>
<dbReference type="PaxDb" id="3702-AT5G15660.1"/>
<dbReference type="EnsemblPlants" id="AT5G15660.1">
    <property type="protein sequence ID" value="AT5G15660.1"/>
    <property type="gene ID" value="AT5G15660"/>
</dbReference>
<dbReference type="GeneID" id="831420"/>
<dbReference type="Gramene" id="AT5G15660.1">
    <property type="protein sequence ID" value="AT5G15660.1"/>
    <property type="gene ID" value="AT5G15660"/>
</dbReference>
<dbReference type="KEGG" id="ath:AT5G15660"/>
<dbReference type="Araport" id="AT5G15660"/>
<dbReference type="TAIR" id="AT5G15660"/>
<dbReference type="eggNOG" id="ENOG502SXXQ">
    <property type="taxonomic scope" value="Eukaryota"/>
</dbReference>
<dbReference type="HOGENOM" id="CLU_027176_8_1_1"/>
<dbReference type="InParanoid" id="Q9LFW0"/>
<dbReference type="PhylomeDB" id="Q9LFW0"/>
<dbReference type="PRO" id="PR:Q9LFW0"/>
<dbReference type="Proteomes" id="UP000006548">
    <property type="component" value="Chromosome 5"/>
</dbReference>
<dbReference type="ExpressionAtlas" id="Q9LFW0">
    <property type="expression patterns" value="baseline and differential"/>
</dbReference>
<dbReference type="GO" id="GO:0052542">
    <property type="term" value="P:defense response by callose deposition"/>
    <property type="evidence" value="ECO:0000315"/>
    <property type="project" value="TAIR"/>
</dbReference>
<dbReference type="InterPro" id="IPR013187">
    <property type="entry name" value="F-box-assoc_dom_typ3"/>
</dbReference>
<dbReference type="InterPro" id="IPR017451">
    <property type="entry name" value="F-box-assoc_interact_dom"/>
</dbReference>
<dbReference type="InterPro" id="IPR036047">
    <property type="entry name" value="F-box-like_dom_sf"/>
</dbReference>
<dbReference type="InterPro" id="IPR001810">
    <property type="entry name" value="F-box_dom"/>
</dbReference>
<dbReference type="InterPro" id="IPR011043">
    <property type="entry name" value="Gal_Oxase/kelch_b-propeller"/>
</dbReference>
<dbReference type="NCBIfam" id="TIGR01640">
    <property type="entry name" value="F_box_assoc_1"/>
    <property type="match status" value="1"/>
</dbReference>
<dbReference type="PANTHER" id="PTHR31111">
    <property type="entry name" value="BNAA05G37150D PROTEIN-RELATED"/>
    <property type="match status" value="1"/>
</dbReference>
<dbReference type="PANTHER" id="PTHR31111:SF67">
    <property type="entry name" value="F-BOX DOMAIN-CONTAINING PROTEIN"/>
    <property type="match status" value="1"/>
</dbReference>
<dbReference type="Pfam" id="PF00646">
    <property type="entry name" value="F-box"/>
    <property type="match status" value="1"/>
</dbReference>
<dbReference type="Pfam" id="PF08268">
    <property type="entry name" value="FBA_3"/>
    <property type="match status" value="1"/>
</dbReference>
<dbReference type="SMART" id="SM00256">
    <property type="entry name" value="FBOX"/>
    <property type="match status" value="1"/>
</dbReference>
<dbReference type="SUPFAM" id="SSF81383">
    <property type="entry name" value="F-box domain"/>
    <property type="match status" value="1"/>
</dbReference>
<dbReference type="SUPFAM" id="SSF50965">
    <property type="entry name" value="Galactose oxidase, central domain"/>
    <property type="match status" value="1"/>
</dbReference>
<sequence length="438" mass="50912">MRRRSKKIKTENNSNPETSEERNKFDEIPHDLVIEILERLPLKSVARFLTVSKLWATTIRSPDFRKSYRGGSSSEPRTLIVSDLNFKEPNPKLHFFRPSISSPSFLSSLTCPFTYPRHEEYYYHHVNGLISVGYGTDQIVINPTTGKFITLPRPKTRRKLVISFFGYDSVSDQYKVLCMTERLRGHPEEASSQHQVYTLGAKQKSWKMINCSIPHRPWSWNAVCINGVVYYIAKTGEGMFRRCLMRFDLKSDNLDLCTILPEEIQTSLHDYFLINYKGKVAIPNQPNFYTYDVWVMNQEGGKIEWLKNITFTIKPRKGFVRYLFVTGTTHTGEFILAPTSYTDEFYVFHYNPDMNSFRKIRVQAPGVKFSFAQKASVVFSDHSLLRLDNLHIRGSTHTATGEFILAPRFYSDDLNVIHFNPDTNSFRSTKVEVYEDYE</sequence>
<protein>
    <recommendedName>
        <fullName>Putative F-box protein At5g15660</fullName>
    </recommendedName>
</protein>
<proteinExistence type="predicted"/>